<sequence>MDVNPTLLFLKVPAQNAISTTFPYTGDPPYSHGTGTGYTMDTVNRTHQYSEKGKWTTNTETGAPQLNPIDGPLPEDNEPSGYAQTDCVLEAMAFLEESHPGIFENSCLETMEVVQQTRVDKLTQGRQTYDWTLNRNQPAATALANTIEVFRSNGLTANESGRLIDFLKDVMDSMDKEEMEITTHFQRKRRVRDNMTKKMVTQRTIGKKKQRLNKKGYLIRALTLNTMTKDAERGKLKRRAIATPGMQIRGFVYFVETLARSICEKLEQSGLPVGGNEKKAKLANVVRKMMTNSQDTELSFTITGDNTKWNENQNPRMFLAMITYITRNQPEWFRNVLSIAPIMFSNKMARLGKGYMFESKSMKLRTQIPAEMLANIDLKYFNESTRKKIEKIRPLLIDGTASLSPGMMMGMFNMLSTVLGVSILNLGQKRYTKTTYWWDGLQSSDDFALIVNAPNHEGIQAGVDRFYRTCKLVGINMSKKKSYINRTGTFEFTSFFYRYGFVANFSMELPSFGVSGINESADMSIGVTVIKNNMINNDLGPATAQMALQLFIKDYRYTYRCHRGDTQIQTRRSFELKKLWDQTRSKAGLLVSDGGPNLYNIRNLHIPEVCLKWELMDEDYQGRLCNPLNPFVSHKEIESINNAVVMPAHGPAKSMEYDAVATTHSWIPKRNRSILNTSQRGILEDEQMYQKCCNLFEKFFPSSSYRRPVGISSMVEAMVSRARIDARIDFESGRIKKEEFSEIMKICCTIEELRRQK</sequence>
<dbReference type="EC" id="2.7.7.48" evidence="1"/>
<dbReference type="EMBL" id="CY005864">
    <property type="protein sequence ID" value="ABB21769.1"/>
    <property type="molecule type" value="Genomic_RNA"/>
</dbReference>
<dbReference type="SMR" id="Q20NV3"/>
<dbReference type="Proteomes" id="UP000008581">
    <property type="component" value="Genome"/>
</dbReference>
<dbReference type="GO" id="GO:0030430">
    <property type="term" value="C:host cell cytoplasm"/>
    <property type="evidence" value="ECO:0007669"/>
    <property type="project" value="UniProtKB-SubCell"/>
</dbReference>
<dbReference type="GO" id="GO:0042025">
    <property type="term" value="C:host cell nucleus"/>
    <property type="evidence" value="ECO:0007669"/>
    <property type="project" value="UniProtKB-SubCell"/>
</dbReference>
<dbReference type="GO" id="GO:0000166">
    <property type="term" value="F:nucleotide binding"/>
    <property type="evidence" value="ECO:0007669"/>
    <property type="project" value="UniProtKB-UniRule"/>
</dbReference>
<dbReference type="GO" id="GO:0003723">
    <property type="term" value="F:RNA binding"/>
    <property type="evidence" value="ECO:0007669"/>
    <property type="project" value="InterPro"/>
</dbReference>
<dbReference type="GO" id="GO:0003968">
    <property type="term" value="F:RNA-directed RNA polymerase activity"/>
    <property type="evidence" value="ECO:0007669"/>
    <property type="project" value="UniProtKB-UniRule"/>
</dbReference>
<dbReference type="GO" id="GO:0006351">
    <property type="term" value="P:DNA-templated transcription"/>
    <property type="evidence" value="ECO:0007669"/>
    <property type="project" value="UniProtKB-UniRule"/>
</dbReference>
<dbReference type="GO" id="GO:0039657">
    <property type="term" value="P:symbiont-mediated suppression of host gene expression"/>
    <property type="evidence" value="ECO:0007669"/>
    <property type="project" value="UniProtKB-KW"/>
</dbReference>
<dbReference type="GO" id="GO:0039523">
    <property type="term" value="P:symbiont-mediated suppression of host mRNA transcription via inhibition of RNA polymerase II activity"/>
    <property type="evidence" value="ECO:0007669"/>
    <property type="project" value="UniProtKB-UniRule"/>
</dbReference>
<dbReference type="GO" id="GO:0039694">
    <property type="term" value="P:viral RNA genome replication"/>
    <property type="evidence" value="ECO:0007669"/>
    <property type="project" value="UniProtKB-UniRule"/>
</dbReference>
<dbReference type="GO" id="GO:0019083">
    <property type="term" value="P:viral transcription"/>
    <property type="evidence" value="ECO:0007669"/>
    <property type="project" value="UniProtKB-KW"/>
</dbReference>
<dbReference type="Gene3D" id="6.10.140.720">
    <property type="match status" value="1"/>
</dbReference>
<dbReference type="HAMAP" id="MF_04065">
    <property type="entry name" value="INFV_RDRP"/>
    <property type="match status" value="1"/>
</dbReference>
<dbReference type="InterPro" id="IPR007099">
    <property type="entry name" value="RNA-dir_pol_NSvirus"/>
</dbReference>
<dbReference type="InterPro" id="IPR001407">
    <property type="entry name" value="RNA_pol_PB1_influenza"/>
</dbReference>
<dbReference type="Pfam" id="PF00602">
    <property type="entry name" value="Flu_PB1"/>
    <property type="match status" value="1"/>
</dbReference>
<dbReference type="PIRSF" id="PIRSF000827">
    <property type="entry name" value="RdRPol_OMV"/>
    <property type="match status" value="1"/>
</dbReference>
<dbReference type="PROSITE" id="PS50525">
    <property type="entry name" value="RDRP_SSRNA_NEG_SEG"/>
    <property type="match status" value="1"/>
</dbReference>
<reference key="1">
    <citation type="journal article" date="2006" name="Science">
        <title>Large-scale sequence analysis of avian influenza isolates.</title>
        <authorList>
            <person name="Obenauer J.C."/>
            <person name="Denson J."/>
            <person name="Mehta P.K."/>
            <person name="Su X."/>
            <person name="Mukatira S."/>
            <person name="Finkelstein D.B."/>
            <person name="Xu X."/>
            <person name="Wang J."/>
            <person name="Ma J."/>
            <person name="Fan Y."/>
            <person name="Rakestraw K.M."/>
            <person name="Webster R.G."/>
            <person name="Hoffmann E."/>
            <person name="Krauss S."/>
            <person name="Zheng J."/>
            <person name="Zhang Z."/>
            <person name="Naeve C.W."/>
        </authorList>
    </citation>
    <scope>NUCLEOTIDE SEQUENCE [GENOMIC RNA]</scope>
</reference>
<organism>
    <name type="scientific">Influenza A virus (strain A/Gull/Minnesota/945/1980 H13N6)</name>
    <dbReference type="NCBI Taxonomy" id="385597"/>
    <lineage>
        <taxon>Viruses</taxon>
        <taxon>Riboviria</taxon>
        <taxon>Orthornavirae</taxon>
        <taxon>Negarnaviricota</taxon>
        <taxon>Polyploviricotina</taxon>
        <taxon>Insthoviricetes</taxon>
        <taxon>Articulavirales</taxon>
        <taxon>Orthomyxoviridae</taxon>
        <taxon>Alphainfluenzavirus</taxon>
        <taxon>Alphainfluenzavirus influenzae</taxon>
        <taxon>Influenza A virus</taxon>
    </lineage>
</organism>
<accession>Q20NV3</accession>
<organismHost>
    <name type="scientific">Aves</name>
    <dbReference type="NCBI Taxonomy" id="8782"/>
</organismHost>
<keyword id="KW-1262">Eukaryotic host gene expression shutoff by virus</keyword>
<keyword id="KW-1191">Eukaryotic host transcription shutoff by virus</keyword>
<keyword id="KW-1035">Host cytoplasm</keyword>
<keyword id="KW-1190">Host gene expression shutoff by virus</keyword>
<keyword id="KW-1048">Host nucleus</keyword>
<keyword id="KW-0945">Host-virus interaction</keyword>
<keyword id="KW-1104">Inhibition of host RNA polymerase II by virus</keyword>
<keyword id="KW-0547">Nucleotide-binding</keyword>
<keyword id="KW-0548">Nucleotidyltransferase</keyword>
<keyword id="KW-0597">Phosphoprotein</keyword>
<keyword id="KW-0696">RNA-directed RNA polymerase</keyword>
<keyword id="KW-0808">Transferase</keyword>
<keyword id="KW-0693">Viral RNA replication</keyword>
<keyword id="KW-1195">Viral transcription</keyword>
<proteinExistence type="inferred from homology"/>
<comment type="function">
    <text evidence="1">RNA-dependent RNA polymerase which is responsible for replication and transcription of virus RNA segments. The transcription of viral mRNAs occurs by a unique mechanism called cap-snatching. 5' methylated caps of cellular mRNAs are cleaved after 10-13 nucleotides by PA. In turn, these short capped RNAs are used as primers by PB1 for transcription of viral mRNAs. During virus replication, PB1 initiates RNA synthesis and copy vRNA into complementary RNA (cRNA) which in turn serves as a template for the production of more vRNAs.</text>
</comment>
<comment type="catalytic activity">
    <reaction evidence="1">
        <text>RNA(n) + a ribonucleoside 5'-triphosphate = RNA(n+1) + diphosphate</text>
        <dbReference type="Rhea" id="RHEA:21248"/>
        <dbReference type="Rhea" id="RHEA-COMP:14527"/>
        <dbReference type="Rhea" id="RHEA-COMP:17342"/>
        <dbReference type="ChEBI" id="CHEBI:33019"/>
        <dbReference type="ChEBI" id="CHEBI:61557"/>
        <dbReference type="ChEBI" id="CHEBI:140395"/>
        <dbReference type="EC" id="2.7.7.48"/>
    </reaction>
</comment>
<comment type="subunit">
    <text evidence="1">Influenza RNA polymerase is composed of three subunits: PB1, PB2 and PA. Interacts (via N-terminus) with PA (via C-terminus). Interacts (via C-terminus) with PB2 (via N-terminus); this interaction is essential for transcription initiation.</text>
</comment>
<comment type="subcellular location">
    <subcellularLocation>
        <location evidence="1">Host nucleus</location>
    </subcellularLocation>
    <subcellularLocation>
        <location evidence="1">Host cytoplasm</location>
    </subcellularLocation>
</comment>
<comment type="PTM">
    <text evidence="1">Phosphorylated by host PRKCA.</text>
</comment>
<comment type="similarity">
    <text evidence="1">Belongs to the influenza viruses polymerase PB1 family.</text>
</comment>
<protein>
    <recommendedName>
        <fullName evidence="1">RNA-directed RNA polymerase catalytic subunit</fullName>
        <ecNumber evidence="1">2.7.7.48</ecNumber>
    </recommendedName>
    <alternativeName>
        <fullName evidence="1">Polymerase basic protein 1</fullName>
        <shortName evidence="1">PB1</shortName>
    </alternativeName>
    <alternativeName>
        <fullName evidence="1">RNA-directed RNA polymerase subunit P1</fullName>
    </alternativeName>
</protein>
<gene>
    <name evidence="1" type="primary">PB1</name>
</gene>
<name>RDRP_I80AD</name>
<evidence type="ECO:0000255" key="1">
    <source>
        <dbReference type="HAMAP-Rule" id="MF_04065"/>
    </source>
</evidence>
<evidence type="ECO:0000256" key="2">
    <source>
        <dbReference type="SAM" id="MobiDB-lite"/>
    </source>
</evidence>
<feature type="chain" id="PRO_0000279598" description="RNA-directed RNA polymerase catalytic subunit">
    <location>
        <begin position="1"/>
        <end position="757"/>
    </location>
</feature>
<feature type="domain" description="RdRp catalytic" evidence="1">
    <location>
        <begin position="286"/>
        <end position="483"/>
    </location>
</feature>
<feature type="region of interest" description="Disordered" evidence="2">
    <location>
        <begin position="50"/>
        <end position="82"/>
    </location>
</feature>
<feature type="region of interest" description="Promoter-binding site" evidence="1">
    <location>
        <begin position="249"/>
        <end position="256"/>
    </location>
</feature>
<feature type="short sequence motif" description="Nuclear localization signal" evidence="1">
    <location>
        <begin position="187"/>
        <end position="195"/>
    </location>
</feature>
<feature type="short sequence motif" description="Nuclear localization signal" evidence="1">
    <location>
        <begin position="203"/>
        <end position="216"/>
    </location>
</feature>
<feature type="compositionally biased region" description="Polar residues" evidence="2">
    <location>
        <begin position="55"/>
        <end position="64"/>
    </location>
</feature>